<proteinExistence type="inferred from homology"/>
<reference key="1">
    <citation type="journal article" date="2011" name="J. Bacteriol.">
        <title>Genome sequence of Thermotoga sp. strain RQ2, a hyperthermophilic bacterium isolated from a geothermally heated region of the seafloor near Ribeira Quente, the Azores.</title>
        <authorList>
            <person name="Swithers K.S."/>
            <person name="DiPippo J.L."/>
            <person name="Bruce D.C."/>
            <person name="Detter C."/>
            <person name="Tapia R."/>
            <person name="Han S."/>
            <person name="Saunders E."/>
            <person name="Goodwin L.A."/>
            <person name="Han J."/>
            <person name="Woyke T."/>
            <person name="Pitluck S."/>
            <person name="Pennacchio L."/>
            <person name="Nolan M."/>
            <person name="Mikhailova N."/>
            <person name="Lykidis A."/>
            <person name="Land M.L."/>
            <person name="Brettin T."/>
            <person name="Stetter K.O."/>
            <person name="Nelson K.E."/>
            <person name="Gogarten J.P."/>
            <person name="Noll K.M."/>
        </authorList>
    </citation>
    <scope>NUCLEOTIDE SEQUENCE [LARGE SCALE GENOMIC DNA]</scope>
    <source>
        <strain>RQ2</strain>
    </source>
</reference>
<name>YIDD_THESQ</name>
<keyword id="KW-0997">Cell inner membrane</keyword>
<keyword id="KW-1003">Cell membrane</keyword>
<keyword id="KW-0472">Membrane</keyword>
<gene>
    <name type="ordered locus">TRQ2_1354</name>
</gene>
<comment type="function">
    <text evidence="1">Could be involved in insertion of integral membrane proteins into the membrane.</text>
</comment>
<comment type="subcellular location">
    <subcellularLocation>
        <location evidence="1">Cell inner membrane</location>
        <topology evidence="1">Peripheral membrane protein</topology>
        <orientation evidence="1">Cytoplasmic side</orientation>
    </subcellularLocation>
</comment>
<comment type="similarity">
    <text evidence="1">Belongs to the UPF0161 family.</text>
</comment>
<sequence length="81" mass="9622">MKKLLIMLIRFYQRYISPLKPPTCRFTPTCSNYFIQALEKHGLLKGTFLGLRRILRCNPLSKGGYDPVPEEFSFKPRRRWS</sequence>
<evidence type="ECO:0000255" key="1">
    <source>
        <dbReference type="HAMAP-Rule" id="MF_00386"/>
    </source>
</evidence>
<feature type="chain" id="PRO_1000122676" description="Putative membrane protein insertion efficiency factor">
    <location>
        <begin position="1"/>
        <end position="81"/>
    </location>
</feature>
<protein>
    <recommendedName>
        <fullName evidence="1">Putative membrane protein insertion efficiency factor</fullName>
    </recommendedName>
</protein>
<dbReference type="EMBL" id="CP000969">
    <property type="protein sequence ID" value="ACB09698.1"/>
    <property type="molecule type" value="Genomic_DNA"/>
</dbReference>
<dbReference type="KEGG" id="trq:TRQ2_1354"/>
<dbReference type="HOGENOM" id="CLU_144811_6_0_0"/>
<dbReference type="Proteomes" id="UP000001687">
    <property type="component" value="Chromosome"/>
</dbReference>
<dbReference type="GO" id="GO:0005886">
    <property type="term" value="C:plasma membrane"/>
    <property type="evidence" value="ECO:0007669"/>
    <property type="project" value="UniProtKB-SubCell"/>
</dbReference>
<dbReference type="HAMAP" id="MF_00386">
    <property type="entry name" value="UPF0161_YidD"/>
    <property type="match status" value="1"/>
</dbReference>
<dbReference type="InterPro" id="IPR002696">
    <property type="entry name" value="Membr_insert_effic_factor_YidD"/>
</dbReference>
<dbReference type="NCBIfam" id="TIGR00278">
    <property type="entry name" value="membrane protein insertion efficiency factor YidD"/>
    <property type="match status" value="1"/>
</dbReference>
<dbReference type="PANTHER" id="PTHR33383">
    <property type="entry name" value="MEMBRANE PROTEIN INSERTION EFFICIENCY FACTOR-RELATED"/>
    <property type="match status" value="1"/>
</dbReference>
<dbReference type="PANTHER" id="PTHR33383:SF1">
    <property type="entry name" value="MEMBRANE PROTEIN INSERTION EFFICIENCY FACTOR-RELATED"/>
    <property type="match status" value="1"/>
</dbReference>
<dbReference type="Pfam" id="PF01809">
    <property type="entry name" value="YidD"/>
    <property type="match status" value="1"/>
</dbReference>
<dbReference type="SMART" id="SM01234">
    <property type="entry name" value="Haemolytic"/>
    <property type="match status" value="1"/>
</dbReference>
<organism>
    <name type="scientific">Thermotoga sp. (strain RQ2)</name>
    <dbReference type="NCBI Taxonomy" id="126740"/>
    <lineage>
        <taxon>Bacteria</taxon>
        <taxon>Thermotogati</taxon>
        <taxon>Thermotogota</taxon>
        <taxon>Thermotogae</taxon>
        <taxon>Thermotogales</taxon>
        <taxon>Thermotogaceae</taxon>
        <taxon>Thermotoga</taxon>
    </lineage>
</organism>
<accession>B1LBK0</accession>